<gene>
    <name evidence="1" type="primary">plsY</name>
    <name type="ordered locus">Pcar_0651</name>
</gene>
<organism>
    <name type="scientific">Syntrophotalea carbinolica (strain DSM 2380 / NBRC 103641 / GraBd1)</name>
    <name type="common">Pelobacter carbinolicus</name>
    <dbReference type="NCBI Taxonomy" id="338963"/>
    <lineage>
        <taxon>Bacteria</taxon>
        <taxon>Pseudomonadati</taxon>
        <taxon>Thermodesulfobacteriota</taxon>
        <taxon>Desulfuromonadia</taxon>
        <taxon>Desulfuromonadales</taxon>
        <taxon>Syntrophotaleaceae</taxon>
        <taxon>Syntrophotalea</taxon>
    </lineage>
</organism>
<evidence type="ECO:0000255" key="1">
    <source>
        <dbReference type="HAMAP-Rule" id="MF_01043"/>
    </source>
</evidence>
<reference key="1">
    <citation type="submission" date="2005-10" db="EMBL/GenBank/DDBJ databases">
        <title>Complete sequence of Pelobacter carbinolicus DSM 2380.</title>
        <authorList>
            <person name="Copeland A."/>
            <person name="Lucas S."/>
            <person name="Lapidus A."/>
            <person name="Barry K."/>
            <person name="Detter J.C."/>
            <person name="Glavina T."/>
            <person name="Hammon N."/>
            <person name="Israni S."/>
            <person name="Pitluck S."/>
            <person name="Chertkov O."/>
            <person name="Schmutz J."/>
            <person name="Larimer F."/>
            <person name="Land M."/>
            <person name="Kyrpides N."/>
            <person name="Ivanova N."/>
            <person name="Richardson P."/>
        </authorList>
    </citation>
    <scope>NUCLEOTIDE SEQUENCE [LARGE SCALE GENOMIC DNA]</scope>
    <source>
        <strain>DSM 2380 / NBRC 103641 / GraBd1</strain>
    </source>
</reference>
<keyword id="KW-0997">Cell inner membrane</keyword>
<keyword id="KW-1003">Cell membrane</keyword>
<keyword id="KW-0444">Lipid biosynthesis</keyword>
<keyword id="KW-0443">Lipid metabolism</keyword>
<keyword id="KW-0472">Membrane</keyword>
<keyword id="KW-0594">Phospholipid biosynthesis</keyword>
<keyword id="KW-1208">Phospholipid metabolism</keyword>
<keyword id="KW-1185">Reference proteome</keyword>
<keyword id="KW-0808">Transferase</keyword>
<keyword id="KW-0812">Transmembrane</keyword>
<keyword id="KW-1133">Transmembrane helix</keyword>
<accession>Q3A6U7</accession>
<feature type="chain" id="PRO_0000188420" description="Glycerol-3-phosphate acyltransferase">
    <location>
        <begin position="1"/>
        <end position="196"/>
    </location>
</feature>
<feature type="transmembrane region" description="Helical" evidence="1">
    <location>
        <begin position="4"/>
        <end position="24"/>
    </location>
</feature>
<feature type="transmembrane region" description="Helical" evidence="1">
    <location>
        <begin position="53"/>
        <end position="73"/>
    </location>
</feature>
<feature type="transmembrane region" description="Helical" evidence="1">
    <location>
        <begin position="78"/>
        <end position="98"/>
    </location>
</feature>
<feature type="transmembrane region" description="Helical" evidence="1">
    <location>
        <begin position="114"/>
        <end position="134"/>
    </location>
</feature>
<feature type="transmembrane region" description="Helical" evidence="1">
    <location>
        <begin position="140"/>
        <end position="160"/>
    </location>
</feature>
<dbReference type="EC" id="2.3.1.275" evidence="1"/>
<dbReference type="EMBL" id="CP000142">
    <property type="protein sequence ID" value="ABA87910.1"/>
    <property type="molecule type" value="Genomic_DNA"/>
</dbReference>
<dbReference type="RefSeq" id="WP_011340353.1">
    <property type="nucleotide sequence ID" value="NC_007498.2"/>
</dbReference>
<dbReference type="SMR" id="Q3A6U7"/>
<dbReference type="STRING" id="338963.Pcar_0651"/>
<dbReference type="KEGG" id="pca:Pcar_0651"/>
<dbReference type="eggNOG" id="COG0344">
    <property type="taxonomic scope" value="Bacteria"/>
</dbReference>
<dbReference type="HOGENOM" id="CLU_081254_0_0_7"/>
<dbReference type="OrthoDB" id="9777124at2"/>
<dbReference type="UniPathway" id="UPA00085"/>
<dbReference type="Proteomes" id="UP000002534">
    <property type="component" value="Chromosome"/>
</dbReference>
<dbReference type="GO" id="GO:0005886">
    <property type="term" value="C:plasma membrane"/>
    <property type="evidence" value="ECO:0007669"/>
    <property type="project" value="UniProtKB-SubCell"/>
</dbReference>
<dbReference type="GO" id="GO:0043772">
    <property type="term" value="F:acyl-phosphate glycerol-3-phosphate acyltransferase activity"/>
    <property type="evidence" value="ECO:0007669"/>
    <property type="project" value="UniProtKB-UniRule"/>
</dbReference>
<dbReference type="GO" id="GO:0008654">
    <property type="term" value="P:phospholipid biosynthetic process"/>
    <property type="evidence" value="ECO:0007669"/>
    <property type="project" value="UniProtKB-UniRule"/>
</dbReference>
<dbReference type="HAMAP" id="MF_01043">
    <property type="entry name" value="PlsY"/>
    <property type="match status" value="1"/>
</dbReference>
<dbReference type="InterPro" id="IPR003811">
    <property type="entry name" value="G3P_acylTferase_PlsY"/>
</dbReference>
<dbReference type="NCBIfam" id="TIGR00023">
    <property type="entry name" value="glycerol-3-phosphate 1-O-acyltransferase PlsY"/>
    <property type="match status" value="1"/>
</dbReference>
<dbReference type="PANTHER" id="PTHR30309:SF0">
    <property type="entry name" value="GLYCEROL-3-PHOSPHATE ACYLTRANSFERASE-RELATED"/>
    <property type="match status" value="1"/>
</dbReference>
<dbReference type="PANTHER" id="PTHR30309">
    <property type="entry name" value="INNER MEMBRANE PROTEIN YGIH"/>
    <property type="match status" value="1"/>
</dbReference>
<dbReference type="Pfam" id="PF02660">
    <property type="entry name" value="G3P_acyltransf"/>
    <property type="match status" value="1"/>
</dbReference>
<dbReference type="SMART" id="SM01207">
    <property type="entry name" value="G3P_acyltransf"/>
    <property type="match status" value="1"/>
</dbReference>
<name>PLSY_SYNC1</name>
<sequence length="196" mass="20535">MTSFYIMLLAAYLIGAIPTGVVLTRLVGASDIRNSGSGNIGATNVYRVAGKKLGVLTLIGDALKGAVPVLIAIKLTDLGDAQVGAVAAAAFIGHCYPVYLKFKGGKGVATALGIFLVLSPLAVLGAFAVFALLVWKWRYVSLGSICAAAAIPILVYFTEGNPALVATTMFISLIVICRHHQNIQRLLNGSENRFKA</sequence>
<comment type="function">
    <text evidence="1">Catalyzes the transfer of an acyl group from acyl-phosphate (acyl-PO(4)) to glycerol-3-phosphate (G3P) to form lysophosphatidic acid (LPA). This enzyme utilizes acyl-phosphate as fatty acyl donor, but not acyl-CoA or acyl-ACP.</text>
</comment>
<comment type="catalytic activity">
    <reaction evidence="1">
        <text>an acyl phosphate + sn-glycerol 3-phosphate = a 1-acyl-sn-glycero-3-phosphate + phosphate</text>
        <dbReference type="Rhea" id="RHEA:34075"/>
        <dbReference type="ChEBI" id="CHEBI:43474"/>
        <dbReference type="ChEBI" id="CHEBI:57597"/>
        <dbReference type="ChEBI" id="CHEBI:57970"/>
        <dbReference type="ChEBI" id="CHEBI:59918"/>
        <dbReference type="EC" id="2.3.1.275"/>
    </reaction>
</comment>
<comment type="pathway">
    <text evidence="1">Lipid metabolism; phospholipid metabolism.</text>
</comment>
<comment type="subunit">
    <text evidence="1">Probably interacts with PlsX.</text>
</comment>
<comment type="subcellular location">
    <subcellularLocation>
        <location evidence="1">Cell inner membrane</location>
        <topology evidence="1">Multi-pass membrane protein</topology>
    </subcellularLocation>
</comment>
<comment type="similarity">
    <text evidence="1">Belongs to the PlsY family.</text>
</comment>
<proteinExistence type="inferred from homology"/>
<protein>
    <recommendedName>
        <fullName evidence="1">Glycerol-3-phosphate acyltransferase</fullName>
    </recommendedName>
    <alternativeName>
        <fullName evidence="1">Acyl-PO4 G3P acyltransferase</fullName>
    </alternativeName>
    <alternativeName>
        <fullName evidence="1">Acyl-phosphate--glycerol-3-phosphate acyltransferase</fullName>
    </alternativeName>
    <alternativeName>
        <fullName evidence="1">G3P acyltransferase</fullName>
        <shortName evidence="1">GPAT</shortName>
        <ecNumber evidence="1">2.3.1.275</ecNumber>
    </alternativeName>
    <alternativeName>
        <fullName evidence="1">Lysophosphatidic acid synthase</fullName>
        <shortName evidence="1">LPA synthase</shortName>
    </alternativeName>
</protein>